<gene>
    <name evidence="1" type="primary">argS</name>
    <name type="ordered locus">YpsIP31758_2043</name>
</gene>
<keyword id="KW-0030">Aminoacyl-tRNA synthetase</keyword>
<keyword id="KW-0067">ATP-binding</keyword>
<keyword id="KW-0963">Cytoplasm</keyword>
<keyword id="KW-0436">Ligase</keyword>
<keyword id="KW-0547">Nucleotide-binding</keyword>
<keyword id="KW-0648">Protein biosynthesis</keyword>
<accession>A7FID8</accession>
<comment type="catalytic activity">
    <reaction evidence="1">
        <text>tRNA(Arg) + L-arginine + ATP = L-arginyl-tRNA(Arg) + AMP + diphosphate</text>
        <dbReference type="Rhea" id="RHEA:20301"/>
        <dbReference type="Rhea" id="RHEA-COMP:9658"/>
        <dbReference type="Rhea" id="RHEA-COMP:9673"/>
        <dbReference type="ChEBI" id="CHEBI:30616"/>
        <dbReference type="ChEBI" id="CHEBI:32682"/>
        <dbReference type="ChEBI" id="CHEBI:33019"/>
        <dbReference type="ChEBI" id="CHEBI:78442"/>
        <dbReference type="ChEBI" id="CHEBI:78513"/>
        <dbReference type="ChEBI" id="CHEBI:456215"/>
        <dbReference type="EC" id="6.1.1.19"/>
    </reaction>
</comment>
<comment type="subunit">
    <text evidence="1">Monomer.</text>
</comment>
<comment type="subcellular location">
    <subcellularLocation>
        <location evidence="1">Cytoplasm</location>
    </subcellularLocation>
</comment>
<comment type="similarity">
    <text evidence="1">Belongs to the class-I aminoacyl-tRNA synthetase family.</text>
</comment>
<feature type="chain" id="PRO_1000057813" description="Arginine--tRNA ligase">
    <location>
        <begin position="1"/>
        <end position="576"/>
    </location>
</feature>
<feature type="short sequence motif" description="'HIGH' region">
    <location>
        <begin position="122"/>
        <end position="132"/>
    </location>
</feature>
<proteinExistence type="inferred from homology"/>
<protein>
    <recommendedName>
        <fullName evidence="1">Arginine--tRNA ligase</fullName>
        <ecNumber evidence="1">6.1.1.19</ecNumber>
    </recommendedName>
    <alternativeName>
        <fullName evidence="1">Arginyl-tRNA synthetase</fullName>
        <shortName evidence="1">ArgRS</shortName>
    </alternativeName>
</protein>
<evidence type="ECO:0000255" key="1">
    <source>
        <dbReference type="HAMAP-Rule" id="MF_00123"/>
    </source>
</evidence>
<sequence>MNIQALLSDKVSQALIAAGAPADCEAQVRQSAKAQFGDYQANGVMAVAKKLGMQPRQLAERVVELLDLTGIASKIEIAGPGFINIFLDRQWVAEKVEYALTAPKLGVAPVEPQTIVVDYSAPNVAKQMHVGHLRSTIIGDAAVRTLAFLGHNVIRANHVGDWGTQFGMLIAYLEKMQNENASDMGLSDLELFYQQAKKTYDEDEEFALRARAYVVKLQSGDEYCRQMWRKLVDITMAQNQVAYDRLNVTLTKDDVMGESLYNAMLPEIVADLKAKGLAVESEGATVVYLDEYKNKDGEPMGVIIQKKDGGYLYTTTDIACAKYRYETLGADRILYYIDSRQHQHLMQAWAIVRKAGYVPESVPLEHHMFGMMLGKDGKPFKTRSGGTVKLSDLLDEAVERAGKLIAEKNPDMPADELKQVINAVGIGAVKYADLSKSRTTDYIFDWDNMLALDGNTAPYMQYAYTRVVSVFRRAGVDENSLTLPLVITEDREAALATRLLQFEEIITTVAREGTPHVMCSYLYDLAGLFSSFYEHCQILNAESEEIRQSRLKLAMLTAKTLKQGLDTLGIQTVERM</sequence>
<organism>
    <name type="scientific">Yersinia pseudotuberculosis serotype O:1b (strain IP 31758)</name>
    <dbReference type="NCBI Taxonomy" id="349747"/>
    <lineage>
        <taxon>Bacteria</taxon>
        <taxon>Pseudomonadati</taxon>
        <taxon>Pseudomonadota</taxon>
        <taxon>Gammaproteobacteria</taxon>
        <taxon>Enterobacterales</taxon>
        <taxon>Yersiniaceae</taxon>
        <taxon>Yersinia</taxon>
    </lineage>
</organism>
<dbReference type="EC" id="6.1.1.19" evidence="1"/>
<dbReference type="EMBL" id="CP000720">
    <property type="protein sequence ID" value="ABS49422.1"/>
    <property type="molecule type" value="Genomic_DNA"/>
</dbReference>
<dbReference type="RefSeq" id="WP_012105133.1">
    <property type="nucleotide sequence ID" value="NC_009708.1"/>
</dbReference>
<dbReference type="SMR" id="A7FID8"/>
<dbReference type="KEGG" id="ypi:YpsIP31758_2043"/>
<dbReference type="HOGENOM" id="CLU_006406_5_1_6"/>
<dbReference type="Proteomes" id="UP000002412">
    <property type="component" value="Chromosome"/>
</dbReference>
<dbReference type="GO" id="GO:0005737">
    <property type="term" value="C:cytoplasm"/>
    <property type="evidence" value="ECO:0007669"/>
    <property type="project" value="UniProtKB-SubCell"/>
</dbReference>
<dbReference type="GO" id="GO:0004814">
    <property type="term" value="F:arginine-tRNA ligase activity"/>
    <property type="evidence" value="ECO:0007669"/>
    <property type="project" value="UniProtKB-UniRule"/>
</dbReference>
<dbReference type="GO" id="GO:0005524">
    <property type="term" value="F:ATP binding"/>
    <property type="evidence" value="ECO:0007669"/>
    <property type="project" value="UniProtKB-UniRule"/>
</dbReference>
<dbReference type="GO" id="GO:0006420">
    <property type="term" value="P:arginyl-tRNA aminoacylation"/>
    <property type="evidence" value="ECO:0007669"/>
    <property type="project" value="UniProtKB-UniRule"/>
</dbReference>
<dbReference type="CDD" id="cd07956">
    <property type="entry name" value="Anticodon_Ia_Arg"/>
    <property type="match status" value="1"/>
</dbReference>
<dbReference type="CDD" id="cd00671">
    <property type="entry name" value="ArgRS_core"/>
    <property type="match status" value="1"/>
</dbReference>
<dbReference type="FunFam" id="1.10.730.10:FF:000001">
    <property type="entry name" value="Arginine--tRNA ligase"/>
    <property type="match status" value="1"/>
</dbReference>
<dbReference type="FunFam" id="3.30.1360.70:FF:000001">
    <property type="entry name" value="Arginine--tRNA ligase"/>
    <property type="match status" value="1"/>
</dbReference>
<dbReference type="FunFam" id="3.40.50.620:FF:000030">
    <property type="entry name" value="Arginine--tRNA ligase"/>
    <property type="match status" value="1"/>
</dbReference>
<dbReference type="Gene3D" id="3.30.1360.70">
    <property type="entry name" value="Arginyl tRNA synthetase N-terminal domain"/>
    <property type="match status" value="1"/>
</dbReference>
<dbReference type="Gene3D" id="3.40.50.620">
    <property type="entry name" value="HUPs"/>
    <property type="match status" value="1"/>
</dbReference>
<dbReference type="Gene3D" id="1.10.730.10">
    <property type="entry name" value="Isoleucyl-tRNA Synthetase, Domain 1"/>
    <property type="match status" value="1"/>
</dbReference>
<dbReference type="HAMAP" id="MF_00123">
    <property type="entry name" value="Arg_tRNA_synth"/>
    <property type="match status" value="1"/>
</dbReference>
<dbReference type="InterPro" id="IPR001412">
    <property type="entry name" value="aa-tRNA-synth_I_CS"/>
</dbReference>
<dbReference type="InterPro" id="IPR001278">
    <property type="entry name" value="Arg-tRNA-ligase"/>
</dbReference>
<dbReference type="InterPro" id="IPR005148">
    <property type="entry name" value="Arg-tRNA-synth_N"/>
</dbReference>
<dbReference type="InterPro" id="IPR036695">
    <property type="entry name" value="Arg-tRNA-synth_N_sf"/>
</dbReference>
<dbReference type="InterPro" id="IPR035684">
    <property type="entry name" value="ArgRS_core"/>
</dbReference>
<dbReference type="InterPro" id="IPR008909">
    <property type="entry name" value="DALR_anticod-bd"/>
</dbReference>
<dbReference type="InterPro" id="IPR014729">
    <property type="entry name" value="Rossmann-like_a/b/a_fold"/>
</dbReference>
<dbReference type="InterPro" id="IPR009080">
    <property type="entry name" value="tRNAsynth_Ia_anticodon-bd"/>
</dbReference>
<dbReference type="NCBIfam" id="TIGR00456">
    <property type="entry name" value="argS"/>
    <property type="match status" value="1"/>
</dbReference>
<dbReference type="PANTHER" id="PTHR11956:SF5">
    <property type="entry name" value="ARGININE--TRNA LIGASE, CYTOPLASMIC"/>
    <property type="match status" value="1"/>
</dbReference>
<dbReference type="PANTHER" id="PTHR11956">
    <property type="entry name" value="ARGINYL-TRNA SYNTHETASE"/>
    <property type="match status" value="1"/>
</dbReference>
<dbReference type="Pfam" id="PF03485">
    <property type="entry name" value="Arg_tRNA_synt_N"/>
    <property type="match status" value="1"/>
</dbReference>
<dbReference type="Pfam" id="PF05746">
    <property type="entry name" value="DALR_1"/>
    <property type="match status" value="1"/>
</dbReference>
<dbReference type="Pfam" id="PF00750">
    <property type="entry name" value="tRNA-synt_1d"/>
    <property type="match status" value="1"/>
</dbReference>
<dbReference type="PRINTS" id="PR01038">
    <property type="entry name" value="TRNASYNTHARG"/>
</dbReference>
<dbReference type="SMART" id="SM01016">
    <property type="entry name" value="Arg_tRNA_synt_N"/>
    <property type="match status" value="1"/>
</dbReference>
<dbReference type="SMART" id="SM00836">
    <property type="entry name" value="DALR_1"/>
    <property type="match status" value="1"/>
</dbReference>
<dbReference type="SUPFAM" id="SSF47323">
    <property type="entry name" value="Anticodon-binding domain of a subclass of class I aminoacyl-tRNA synthetases"/>
    <property type="match status" value="1"/>
</dbReference>
<dbReference type="SUPFAM" id="SSF55190">
    <property type="entry name" value="Arginyl-tRNA synthetase (ArgRS), N-terminal 'additional' domain"/>
    <property type="match status" value="1"/>
</dbReference>
<dbReference type="SUPFAM" id="SSF52374">
    <property type="entry name" value="Nucleotidylyl transferase"/>
    <property type="match status" value="1"/>
</dbReference>
<dbReference type="PROSITE" id="PS00178">
    <property type="entry name" value="AA_TRNA_LIGASE_I"/>
    <property type="match status" value="1"/>
</dbReference>
<reference key="1">
    <citation type="journal article" date="2007" name="PLoS Genet.">
        <title>The complete genome sequence of Yersinia pseudotuberculosis IP31758, the causative agent of Far East scarlet-like fever.</title>
        <authorList>
            <person name="Eppinger M."/>
            <person name="Rosovitz M.J."/>
            <person name="Fricke W.F."/>
            <person name="Rasko D.A."/>
            <person name="Kokorina G."/>
            <person name="Fayolle C."/>
            <person name="Lindler L.E."/>
            <person name="Carniel E."/>
            <person name="Ravel J."/>
        </authorList>
    </citation>
    <scope>NUCLEOTIDE SEQUENCE [LARGE SCALE GENOMIC DNA]</scope>
    <source>
        <strain>IP 31758</strain>
    </source>
</reference>
<name>SYR_YERP3</name>